<proteinExistence type="evidence at protein level"/>
<evidence type="ECO:0000250" key="1">
    <source>
        <dbReference type="UniProtKB" id="Q96P68"/>
    </source>
</evidence>
<evidence type="ECO:0000255" key="2"/>
<evidence type="ECO:0000255" key="3">
    <source>
        <dbReference type="PROSITE-ProRule" id="PRU00521"/>
    </source>
</evidence>
<evidence type="ECO:0000269" key="4">
    <source>
    </source>
</evidence>
<evidence type="ECO:0000269" key="5">
    <source>
    </source>
</evidence>
<evidence type="ECO:0000269" key="6">
    <source>
    </source>
</evidence>
<evidence type="ECO:0000269" key="7">
    <source>
    </source>
</evidence>
<evidence type="ECO:0000269" key="8">
    <source>
    </source>
</evidence>
<evidence type="ECO:0000303" key="9">
    <source>
    </source>
</evidence>
<evidence type="ECO:0000305" key="10"/>
<accession>Q6IYF8</accession>
<accession>Q0VEK6</accession>
<accession>Q3UQE9</accession>
<sequence length="337" mass="38230">MIEPLDSPASDSDFLDYPSALGNCTDEQISFKMQYLPVIYSIIFLVGFPGNTVAISIYIFKMRPWRGSTVIMLNLALTDLLYLTSLPFLIHYYASGENWIFGDFMCKFIRFGFHFNLYSSILFLTCFSLFRYVVIIHPMSCFSIQKTRWAVVACAGVWVISLVAVMPMTFLITSTTRTNRSACLDLTSSDDLTTIKWYNLILTATTFCLPLVIVTLCYTTIISTLTHGPRTHSCFKQKARRLTILLLLVFYICFLPFHILRVIRIESRLLSISCSIESHIHEAYIVSRPLAALNTFGNLLLYVVVSNNFQQAFCSIVRCKASGDLEQGKKDSCSNNP</sequence>
<feature type="chain" id="PRO_0000069995" description="2-oxoglutarate receptor 1">
    <location>
        <begin position="1"/>
        <end position="337"/>
    </location>
</feature>
<feature type="topological domain" description="Extracellular" evidence="2">
    <location>
        <begin position="1"/>
        <end position="38"/>
    </location>
</feature>
<feature type="transmembrane region" description="Helical; Name=1" evidence="2">
    <location>
        <begin position="39"/>
        <end position="59"/>
    </location>
</feature>
<feature type="topological domain" description="Cytoplasmic" evidence="2">
    <location>
        <begin position="60"/>
        <end position="69"/>
    </location>
</feature>
<feature type="transmembrane region" description="Helical; Name=2" evidence="2">
    <location>
        <begin position="70"/>
        <end position="90"/>
    </location>
</feature>
<feature type="topological domain" description="Extracellular" evidence="2">
    <location>
        <begin position="91"/>
        <end position="116"/>
    </location>
</feature>
<feature type="transmembrane region" description="Helical; Name=3" evidence="2">
    <location>
        <begin position="117"/>
        <end position="137"/>
    </location>
</feature>
<feature type="topological domain" description="Cytoplasmic" evidence="2">
    <location>
        <begin position="138"/>
        <end position="151"/>
    </location>
</feature>
<feature type="transmembrane region" description="Helical; Name=4" evidence="2">
    <location>
        <begin position="152"/>
        <end position="172"/>
    </location>
</feature>
<feature type="topological domain" description="Extracellular" evidence="2">
    <location>
        <begin position="173"/>
        <end position="200"/>
    </location>
</feature>
<feature type="transmembrane region" description="Helical; Name=5" evidence="2">
    <location>
        <begin position="201"/>
        <end position="221"/>
    </location>
</feature>
<feature type="topological domain" description="Cytoplasmic" evidence="2">
    <location>
        <begin position="222"/>
        <end position="242"/>
    </location>
</feature>
<feature type="transmembrane region" description="Helical; Name=6" evidence="2">
    <location>
        <begin position="243"/>
        <end position="263"/>
    </location>
</feature>
<feature type="topological domain" description="Extracellular" evidence="2">
    <location>
        <begin position="264"/>
        <end position="284"/>
    </location>
</feature>
<feature type="transmembrane region" description="Helical; Name=7" evidence="2">
    <location>
        <begin position="285"/>
        <end position="305"/>
    </location>
</feature>
<feature type="topological domain" description="Cytoplasmic" evidence="2">
    <location>
        <begin position="306"/>
        <end position="337"/>
    </location>
</feature>
<feature type="glycosylation site" description="N-linked (GlcNAc...) asparagine" evidence="2">
    <location>
        <position position="23"/>
    </location>
</feature>
<feature type="disulfide bond" evidence="3">
    <location>
        <begin position="106"/>
        <end position="183"/>
    </location>
</feature>
<dbReference type="EMBL" id="AY612852">
    <property type="protein sequence ID" value="AAT10591.1"/>
    <property type="molecule type" value="mRNA"/>
</dbReference>
<dbReference type="EMBL" id="AK142510">
    <property type="protein sequence ID" value="BAE25093.1"/>
    <property type="status" value="ALT_FRAME"/>
    <property type="molecule type" value="mRNA"/>
</dbReference>
<dbReference type="EMBL" id="BC119196">
    <property type="protein sequence ID" value="AAI19197.1"/>
    <property type="molecule type" value="mRNA"/>
</dbReference>
<dbReference type="EMBL" id="BC119200">
    <property type="protein sequence ID" value="AAI19201.1"/>
    <property type="molecule type" value="mRNA"/>
</dbReference>
<dbReference type="CCDS" id="CCDS27340.1"/>
<dbReference type="RefSeq" id="NP_001001490.1">
    <property type="nucleotide sequence ID" value="NM_001001490.3"/>
</dbReference>
<dbReference type="SMR" id="Q6IYF8"/>
<dbReference type="FunCoup" id="Q6IYF8">
    <property type="interactions" value="938"/>
</dbReference>
<dbReference type="STRING" id="10090.ENSMUSP00000055137"/>
<dbReference type="GuidetoPHARMACOLOGY" id="162"/>
<dbReference type="GlyCosmos" id="Q6IYF8">
    <property type="glycosylation" value="1 site, No reported glycans"/>
</dbReference>
<dbReference type="GlyGen" id="Q6IYF8">
    <property type="glycosylation" value="1 site"/>
</dbReference>
<dbReference type="PhosphoSitePlus" id="Q6IYF8"/>
<dbReference type="PaxDb" id="10090-ENSMUSP00000055137"/>
<dbReference type="PeptideAtlas" id="Q6IYF8"/>
<dbReference type="Antibodypedia" id="10650">
    <property type="antibodies" value="121 antibodies from 27 providers"/>
</dbReference>
<dbReference type="Ensembl" id="ENSMUST00000058213.6">
    <property type="protein sequence ID" value="ENSMUSP00000055137.6"/>
    <property type="gene ID" value="ENSMUSG00000044819.6"/>
</dbReference>
<dbReference type="GeneID" id="239283"/>
<dbReference type="KEGG" id="mmu:239283"/>
<dbReference type="UCSC" id="uc007uzo.1">
    <property type="organism name" value="mouse"/>
</dbReference>
<dbReference type="AGR" id="MGI:2685145"/>
<dbReference type="CTD" id="27199"/>
<dbReference type="MGI" id="MGI:2685145">
    <property type="gene designation" value="Oxgr1"/>
</dbReference>
<dbReference type="VEuPathDB" id="HostDB:ENSMUSG00000044819"/>
<dbReference type="eggNOG" id="ENOG502QYYG">
    <property type="taxonomic scope" value="Eukaryota"/>
</dbReference>
<dbReference type="GeneTree" id="ENSGT01030000234621"/>
<dbReference type="HOGENOM" id="CLU_009579_8_2_1"/>
<dbReference type="InParanoid" id="Q6IYF8"/>
<dbReference type="OMA" id="FVIIHPM"/>
<dbReference type="OrthoDB" id="5967390at2759"/>
<dbReference type="PhylomeDB" id="Q6IYF8"/>
<dbReference type="TreeFam" id="TF330775"/>
<dbReference type="Reactome" id="R-MMU-373076">
    <property type="pathway name" value="Class A/1 (Rhodopsin-like receptors)"/>
</dbReference>
<dbReference type="Reactome" id="R-MMU-418594">
    <property type="pathway name" value="G alpha (i) signalling events"/>
</dbReference>
<dbReference type="BioGRID-ORCS" id="239283">
    <property type="hits" value="1 hit in 78 CRISPR screens"/>
</dbReference>
<dbReference type="PRO" id="PR:Q6IYF8"/>
<dbReference type="Proteomes" id="UP000000589">
    <property type="component" value="Chromosome 14"/>
</dbReference>
<dbReference type="RNAct" id="Q6IYF8">
    <property type="molecule type" value="protein"/>
</dbReference>
<dbReference type="Bgee" id="ENSMUSG00000044819">
    <property type="expression patterns" value="Expressed in right kidney and 19 other cell types or tissues"/>
</dbReference>
<dbReference type="GO" id="GO:0005886">
    <property type="term" value="C:plasma membrane"/>
    <property type="evidence" value="ECO:0000250"/>
    <property type="project" value="UniProtKB"/>
</dbReference>
<dbReference type="GO" id="GO:0016208">
    <property type="term" value="F:AMP binding"/>
    <property type="evidence" value="ECO:0000266"/>
    <property type="project" value="MGI"/>
</dbReference>
<dbReference type="GO" id="GO:0001609">
    <property type="term" value="F:G protein-coupled adenosine receptor activity"/>
    <property type="evidence" value="ECO:0000266"/>
    <property type="project" value="MGI"/>
</dbReference>
<dbReference type="GO" id="GO:0004930">
    <property type="term" value="F:G protein-coupled receptor activity"/>
    <property type="evidence" value="ECO:0000250"/>
    <property type="project" value="UniProtKB"/>
</dbReference>
<dbReference type="GO" id="GO:0001883">
    <property type="term" value="F:purine nucleoside binding"/>
    <property type="evidence" value="ECO:0000266"/>
    <property type="project" value="MGI"/>
</dbReference>
<dbReference type="GO" id="GO:0007188">
    <property type="term" value="P:adenylate cyclase-modulating G protein-coupled receptor signaling pathway"/>
    <property type="evidence" value="ECO:0000266"/>
    <property type="project" value="MGI"/>
</dbReference>
<dbReference type="GO" id="GO:0007200">
    <property type="term" value="P:phospholipase C-activating G protein-coupled receptor signaling pathway"/>
    <property type="evidence" value="ECO:0007669"/>
    <property type="project" value="Ensembl"/>
</dbReference>
<dbReference type="CDD" id="cd15375">
    <property type="entry name" value="7tmA_OXGR1"/>
    <property type="match status" value="1"/>
</dbReference>
<dbReference type="FunFam" id="1.20.1070.10:FF:000293">
    <property type="entry name" value="2-oxoglutarate receptor 1"/>
    <property type="match status" value="1"/>
</dbReference>
<dbReference type="Gene3D" id="1.20.1070.10">
    <property type="entry name" value="Rhodopsin 7-helix transmembrane proteins"/>
    <property type="match status" value="1"/>
</dbReference>
<dbReference type="InterPro" id="IPR000276">
    <property type="entry name" value="GPCR_Rhodpsn"/>
</dbReference>
<dbReference type="InterPro" id="IPR017452">
    <property type="entry name" value="GPCR_Rhodpsn_7TM"/>
</dbReference>
<dbReference type="PANTHER" id="PTHR24231:SF15">
    <property type="entry name" value="2-OXOGLUTARATE RECEPTOR 1"/>
    <property type="match status" value="1"/>
</dbReference>
<dbReference type="PANTHER" id="PTHR24231">
    <property type="entry name" value="PURINOCEPTOR-RELATED G-PROTEIN COUPLED RECEPTOR"/>
    <property type="match status" value="1"/>
</dbReference>
<dbReference type="Pfam" id="PF00001">
    <property type="entry name" value="7tm_1"/>
    <property type="match status" value="1"/>
</dbReference>
<dbReference type="PRINTS" id="PR00237">
    <property type="entry name" value="GPCRRHODOPSN"/>
</dbReference>
<dbReference type="PRINTS" id="PR01157">
    <property type="entry name" value="P2YPURNOCPTR"/>
</dbReference>
<dbReference type="SUPFAM" id="SSF81321">
    <property type="entry name" value="Family A G protein-coupled receptor-like"/>
    <property type="match status" value="1"/>
</dbReference>
<dbReference type="PROSITE" id="PS50262">
    <property type="entry name" value="G_PROTEIN_RECEP_F1_2"/>
    <property type="match status" value="1"/>
</dbReference>
<gene>
    <name type="primary">Oxgr1</name>
    <name evidence="9" type="synonym">Gpr99</name>
</gene>
<reference key="1">
    <citation type="journal article" date="2004" name="Nature">
        <title>Citric acid cycle intermediates as ligands for orphan G-protein-coupled receptors.</title>
        <authorList>
            <person name="He W."/>
            <person name="Miao F.J.-P."/>
            <person name="Lin D.C.-H."/>
            <person name="Schwandner R.T."/>
            <person name="Wang Z."/>
            <person name="Gao J."/>
            <person name="Chen J.-L."/>
            <person name="Tian H."/>
            <person name="Ling L."/>
        </authorList>
    </citation>
    <scope>NUCLEOTIDE SEQUENCE [MRNA]</scope>
    <scope>FUNCTION</scope>
    <scope>TISSUE SPECIFICITY</scope>
    <source>
        <strain>BALB/cJ</strain>
    </source>
</reference>
<reference key="2">
    <citation type="journal article" date="2005" name="Science">
        <title>The transcriptional landscape of the mammalian genome.</title>
        <authorList>
            <person name="Carninci P."/>
            <person name="Kasukawa T."/>
            <person name="Katayama S."/>
            <person name="Gough J."/>
            <person name="Frith M.C."/>
            <person name="Maeda N."/>
            <person name="Oyama R."/>
            <person name="Ravasi T."/>
            <person name="Lenhard B."/>
            <person name="Wells C."/>
            <person name="Kodzius R."/>
            <person name="Shimokawa K."/>
            <person name="Bajic V.B."/>
            <person name="Brenner S.E."/>
            <person name="Batalov S."/>
            <person name="Forrest A.R."/>
            <person name="Zavolan M."/>
            <person name="Davis M.J."/>
            <person name="Wilming L.G."/>
            <person name="Aidinis V."/>
            <person name="Allen J.E."/>
            <person name="Ambesi-Impiombato A."/>
            <person name="Apweiler R."/>
            <person name="Aturaliya R.N."/>
            <person name="Bailey T.L."/>
            <person name="Bansal M."/>
            <person name="Baxter L."/>
            <person name="Beisel K.W."/>
            <person name="Bersano T."/>
            <person name="Bono H."/>
            <person name="Chalk A.M."/>
            <person name="Chiu K.P."/>
            <person name="Choudhary V."/>
            <person name="Christoffels A."/>
            <person name="Clutterbuck D.R."/>
            <person name="Crowe M.L."/>
            <person name="Dalla E."/>
            <person name="Dalrymple B.P."/>
            <person name="de Bono B."/>
            <person name="Della Gatta G."/>
            <person name="di Bernardo D."/>
            <person name="Down T."/>
            <person name="Engstrom P."/>
            <person name="Fagiolini M."/>
            <person name="Faulkner G."/>
            <person name="Fletcher C.F."/>
            <person name="Fukushima T."/>
            <person name="Furuno M."/>
            <person name="Futaki S."/>
            <person name="Gariboldi M."/>
            <person name="Georgii-Hemming P."/>
            <person name="Gingeras T.R."/>
            <person name="Gojobori T."/>
            <person name="Green R.E."/>
            <person name="Gustincich S."/>
            <person name="Harbers M."/>
            <person name="Hayashi Y."/>
            <person name="Hensch T.K."/>
            <person name="Hirokawa N."/>
            <person name="Hill D."/>
            <person name="Huminiecki L."/>
            <person name="Iacono M."/>
            <person name="Ikeo K."/>
            <person name="Iwama A."/>
            <person name="Ishikawa T."/>
            <person name="Jakt M."/>
            <person name="Kanapin A."/>
            <person name="Katoh M."/>
            <person name="Kawasawa Y."/>
            <person name="Kelso J."/>
            <person name="Kitamura H."/>
            <person name="Kitano H."/>
            <person name="Kollias G."/>
            <person name="Krishnan S.P."/>
            <person name="Kruger A."/>
            <person name="Kummerfeld S.K."/>
            <person name="Kurochkin I.V."/>
            <person name="Lareau L.F."/>
            <person name="Lazarevic D."/>
            <person name="Lipovich L."/>
            <person name="Liu J."/>
            <person name="Liuni S."/>
            <person name="McWilliam S."/>
            <person name="Madan Babu M."/>
            <person name="Madera M."/>
            <person name="Marchionni L."/>
            <person name="Matsuda H."/>
            <person name="Matsuzawa S."/>
            <person name="Miki H."/>
            <person name="Mignone F."/>
            <person name="Miyake S."/>
            <person name="Morris K."/>
            <person name="Mottagui-Tabar S."/>
            <person name="Mulder N."/>
            <person name="Nakano N."/>
            <person name="Nakauchi H."/>
            <person name="Ng P."/>
            <person name="Nilsson R."/>
            <person name="Nishiguchi S."/>
            <person name="Nishikawa S."/>
            <person name="Nori F."/>
            <person name="Ohara O."/>
            <person name="Okazaki Y."/>
            <person name="Orlando V."/>
            <person name="Pang K.C."/>
            <person name="Pavan W.J."/>
            <person name="Pavesi G."/>
            <person name="Pesole G."/>
            <person name="Petrovsky N."/>
            <person name="Piazza S."/>
            <person name="Reed J."/>
            <person name="Reid J.F."/>
            <person name="Ring B.Z."/>
            <person name="Ringwald M."/>
            <person name="Rost B."/>
            <person name="Ruan Y."/>
            <person name="Salzberg S.L."/>
            <person name="Sandelin A."/>
            <person name="Schneider C."/>
            <person name="Schoenbach C."/>
            <person name="Sekiguchi K."/>
            <person name="Semple C.A."/>
            <person name="Seno S."/>
            <person name="Sessa L."/>
            <person name="Sheng Y."/>
            <person name="Shibata Y."/>
            <person name="Shimada H."/>
            <person name="Shimada K."/>
            <person name="Silva D."/>
            <person name="Sinclair B."/>
            <person name="Sperling S."/>
            <person name="Stupka E."/>
            <person name="Sugiura K."/>
            <person name="Sultana R."/>
            <person name="Takenaka Y."/>
            <person name="Taki K."/>
            <person name="Tammoja K."/>
            <person name="Tan S.L."/>
            <person name="Tang S."/>
            <person name="Taylor M.S."/>
            <person name="Tegner J."/>
            <person name="Teichmann S.A."/>
            <person name="Ueda H.R."/>
            <person name="van Nimwegen E."/>
            <person name="Verardo R."/>
            <person name="Wei C.L."/>
            <person name="Yagi K."/>
            <person name="Yamanishi H."/>
            <person name="Zabarovsky E."/>
            <person name="Zhu S."/>
            <person name="Zimmer A."/>
            <person name="Hide W."/>
            <person name="Bult C."/>
            <person name="Grimmond S.M."/>
            <person name="Teasdale R.D."/>
            <person name="Liu E.T."/>
            <person name="Brusic V."/>
            <person name="Quackenbush J."/>
            <person name="Wahlestedt C."/>
            <person name="Mattick J.S."/>
            <person name="Hume D.A."/>
            <person name="Kai C."/>
            <person name="Sasaki D."/>
            <person name="Tomaru Y."/>
            <person name="Fukuda S."/>
            <person name="Kanamori-Katayama M."/>
            <person name="Suzuki M."/>
            <person name="Aoki J."/>
            <person name="Arakawa T."/>
            <person name="Iida J."/>
            <person name="Imamura K."/>
            <person name="Itoh M."/>
            <person name="Kato T."/>
            <person name="Kawaji H."/>
            <person name="Kawagashira N."/>
            <person name="Kawashima T."/>
            <person name="Kojima M."/>
            <person name="Kondo S."/>
            <person name="Konno H."/>
            <person name="Nakano K."/>
            <person name="Ninomiya N."/>
            <person name="Nishio T."/>
            <person name="Okada M."/>
            <person name="Plessy C."/>
            <person name="Shibata K."/>
            <person name="Shiraki T."/>
            <person name="Suzuki S."/>
            <person name="Tagami M."/>
            <person name="Waki K."/>
            <person name="Watahiki A."/>
            <person name="Okamura-Oho Y."/>
            <person name="Suzuki H."/>
            <person name="Kawai J."/>
            <person name="Hayashizaki Y."/>
        </authorList>
    </citation>
    <scope>NUCLEOTIDE SEQUENCE [LARGE SCALE MRNA]</scope>
    <source>
        <strain>C57BL/6J</strain>
        <tissue>Kidney</tissue>
    </source>
</reference>
<reference key="3">
    <citation type="journal article" date="2004" name="Genome Res.">
        <title>The status, quality, and expansion of the NIH full-length cDNA project: the Mammalian Gene Collection (MGC).</title>
        <authorList>
            <consortium name="The MGC Project Team"/>
        </authorList>
    </citation>
    <scope>NUCLEOTIDE SEQUENCE [LARGE SCALE MRNA]</scope>
    <source>
        <tissue>Brain</tissue>
    </source>
</reference>
<reference key="4">
    <citation type="journal article" date="2013" name="J. Biol. Chem.">
        <title>Identification of GPR99 protein as a potential third cysteinyl leukotriene receptor with a preference for leukotriene E4 ligand.</title>
        <authorList>
            <person name="Kanaoka Y."/>
            <person name="Maekawa A."/>
            <person name="Austen K.F."/>
        </authorList>
    </citation>
    <scope>FUNCTION</scope>
</reference>
<reference key="5">
    <citation type="journal article" date="2013" name="J. Clin. Invest.">
        <title>alpha-Ketoglutarate regulates acid-base balance through an intrarenal paracrine mechanism.</title>
        <authorList>
            <person name="Tokonami N."/>
            <person name="Morla L."/>
            <person name="Centeno G."/>
            <person name="Mordasini D."/>
            <person name="Ramakrishnan S.K."/>
            <person name="Nikolaeva S."/>
            <person name="Wagner C.A."/>
            <person name="Bonny O."/>
            <person name="Houillier P."/>
            <person name="Doucet A."/>
            <person name="Firsov D."/>
        </authorList>
    </citation>
    <scope>FUNCTION</scope>
    <scope>TISSUE SPECIFICITY</scope>
</reference>
<reference key="6">
    <citation type="journal article" date="2016" name="Proc. Natl. Acad. Sci. U.S.A.">
        <title>Leukotriene E4 elicits respiratory epithelial cell mucin release through the G-protein-coupled receptor, GPR99.</title>
        <authorList>
            <person name="Bankova L.G."/>
            <person name="Lai J."/>
            <person name="Yoshimoto E."/>
            <person name="Boyce J.A."/>
            <person name="Austen K.F."/>
            <person name="Kanaoka Y."/>
            <person name="Barrett N.A."/>
        </authorList>
    </citation>
    <scope>FUNCTION</scope>
</reference>
<reference key="7">
    <citation type="journal article" date="2023" name="J. Clin. Invest.">
        <title>The immunometabolite itaconate stimulates OXGR1 to promote mucociliary clearance during the pulmonary innate immune response.</title>
        <authorList>
            <person name="Zeng Y.R."/>
            <person name="Song J.B."/>
            <person name="Wang D."/>
            <person name="Huang Z.X."/>
            <person name="Zhang C."/>
            <person name="Sun Y.P."/>
            <person name="Shu G."/>
            <person name="Xiong Y."/>
            <person name="Guan K.L."/>
            <person name="Ye D."/>
            <person name="Wang P."/>
        </authorList>
    </citation>
    <scope>FUNCTION</scope>
</reference>
<keyword id="KW-1003">Cell membrane</keyword>
<keyword id="KW-1015">Disulfide bond</keyword>
<keyword id="KW-0297">G-protein coupled receptor</keyword>
<keyword id="KW-0325">Glycoprotein</keyword>
<keyword id="KW-0391">Immunity</keyword>
<keyword id="KW-0399">Innate immunity</keyword>
<keyword id="KW-0472">Membrane</keyword>
<keyword id="KW-0675">Receptor</keyword>
<keyword id="KW-1185">Reference proteome</keyword>
<keyword id="KW-0807">Transducer</keyword>
<keyword id="KW-0812">Transmembrane</keyword>
<keyword id="KW-1133">Transmembrane helix</keyword>
<comment type="function">
    <text evidence="4 5 6 7 8">G protein-coupled receptor for dicarboxylates and amino dicarboxylates (PubMed:15141213, PubMed:23504326, PubMed:27185938). Receptor for itaconate produced by activated macrophages upon bacterial infection. In the respiratory epithelium, couples the binding of itaconate to the activation of GNA11 and downstream intracellular Ca(2+) release, leading to mucocilliary clearance of airborne pathogens (PubMed:36919698). Receptor for leukotriene E4 (LTE4) produced by mast cells upon allergic inflammation. Binds with high affinity to LTE4 and elicits mucin release from pulmonary epithelium in response to airborne fungi allergens. Regulates mucin-producing goblet cell homeostasis (PubMed:23504326, PubMed:27185938). Receptor for alpha-ketoglutarate produced by proximal tubule renal cells upon metabolic alkalosis. In an intrarenal paracrine signaling pathway, binds alpha-ketoglutarate and drives transepithelial salt reabsorption and bicarbonate secretion by SLC26A4/pendrin-positive intercalated cells (PubMed:23934124).</text>
</comment>
<comment type="subcellular location">
    <subcellularLocation>
        <location evidence="1">Cell membrane</location>
        <topology evidence="2">Multi-pass membrane protein</topology>
    </subcellularLocation>
    <text evidence="1">Upon itaconate binding, internalizes via endocytosis in a beta-arrestin dependent manner.</text>
</comment>
<comment type="tissue specificity">
    <text evidence="4 6">Predominantly expressed in the kidney with limited expression in the testis and the smooth muscle. Expressed in SLC26A4/pendrin-positive type B and non-A non-B intercalated cells (at protein level).</text>
</comment>
<comment type="similarity">
    <text evidence="3">Belongs to the G-protein coupled receptor 1 family.</text>
</comment>
<comment type="sequence caution" evidence="10">
    <conflict type="frameshift">
        <sequence resource="EMBL-CDS" id="BAE25093"/>
    </conflict>
</comment>
<name>OXGR1_MOUSE</name>
<organism>
    <name type="scientific">Mus musculus</name>
    <name type="common">Mouse</name>
    <dbReference type="NCBI Taxonomy" id="10090"/>
    <lineage>
        <taxon>Eukaryota</taxon>
        <taxon>Metazoa</taxon>
        <taxon>Chordata</taxon>
        <taxon>Craniata</taxon>
        <taxon>Vertebrata</taxon>
        <taxon>Euteleostomi</taxon>
        <taxon>Mammalia</taxon>
        <taxon>Eutheria</taxon>
        <taxon>Euarchontoglires</taxon>
        <taxon>Glires</taxon>
        <taxon>Rodentia</taxon>
        <taxon>Myomorpha</taxon>
        <taxon>Muroidea</taxon>
        <taxon>Muridae</taxon>
        <taxon>Murinae</taxon>
        <taxon>Mus</taxon>
        <taxon>Mus</taxon>
    </lineage>
</organism>
<protein>
    <recommendedName>
        <fullName>2-oxoglutarate receptor 1</fullName>
    </recommendedName>
    <alternativeName>
        <fullName>Alpha-ketoglutarate receptor 1</fullName>
    </alternativeName>
    <alternativeName>
        <fullName>G-protein coupled receptor 99</fullName>
    </alternativeName>
</protein>